<accession>B2TIE4</accession>
<dbReference type="EC" id="2.7.14.1" evidence="1"/>
<dbReference type="EMBL" id="CP001056">
    <property type="protein sequence ID" value="ACD24219.1"/>
    <property type="molecule type" value="Genomic_DNA"/>
</dbReference>
<dbReference type="SMR" id="B2TIE4"/>
<dbReference type="KEGG" id="cbk:CLL_A0206"/>
<dbReference type="PATRIC" id="fig|935198.13.peg.180"/>
<dbReference type="HOGENOM" id="CLU_066591_1_0_9"/>
<dbReference type="Proteomes" id="UP000001195">
    <property type="component" value="Chromosome"/>
</dbReference>
<dbReference type="GO" id="GO:0005615">
    <property type="term" value="C:extracellular space"/>
    <property type="evidence" value="ECO:0007669"/>
    <property type="project" value="TreeGrafter"/>
</dbReference>
<dbReference type="GO" id="GO:0005524">
    <property type="term" value="F:ATP binding"/>
    <property type="evidence" value="ECO:0007669"/>
    <property type="project" value="UniProtKB-KW"/>
</dbReference>
<dbReference type="GO" id="GO:0004111">
    <property type="term" value="F:creatine kinase activity"/>
    <property type="evidence" value="ECO:0007669"/>
    <property type="project" value="InterPro"/>
</dbReference>
<dbReference type="GO" id="GO:0004672">
    <property type="term" value="F:protein kinase activity"/>
    <property type="evidence" value="ECO:0007669"/>
    <property type="project" value="UniProtKB-UniRule"/>
</dbReference>
<dbReference type="GO" id="GO:0046314">
    <property type="term" value="P:phosphocreatine biosynthetic process"/>
    <property type="evidence" value="ECO:0007669"/>
    <property type="project" value="InterPro"/>
</dbReference>
<dbReference type="CDD" id="cd07930">
    <property type="entry name" value="bacterial_phosphagen_kinase"/>
    <property type="match status" value="1"/>
</dbReference>
<dbReference type="Gene3D" id="3.30.590.10">
    <property type="entry name" value="Glutamine synthetase/guanido kinase, catalytic domain"/>
    <property type="match status" value="1"/>
</dbReference>
<dbReference type="HAMAP" id="MF_00602">
    <property type="entry name" value="Prot_Arg_kinase"/>
    <property type="match status" value="1"/>
</dbReference>
<dbReference type="InterPro" id="IPR023660">
    <property type="entry name" value="Arg_Kinase"/>
</dbReference>
<dbReference type="InterPro" id="IPR000749">
    <property type="entry name" value="ATP-guanido_PTrfase"/>
</dbReference>
<dbReference type="InterPro" id="IPR022414">
    <property type="entry name" value="ATP-guanido_PTrfase_cat"/>
</dbReference>
<dbReference type="InterPro" id="IPR014746">
    <property type="entry name" value="Gln_synth/guanido_kin_cat_dom"/>
</dbReference>
<dbReference type="NCBIfam" id="NF002194">
    <property type="entry name" value="PRK01059.1-4"/>
    <property type="match status" value="1"/>
</dbReference>
<dbReference type="PANTHER" id="PTHR11547:SF38">
    <property type="entry name" value="ARGININE KINASE 1-RELATED"/>
    <property type="match status" value="1"/>
</dbReference>
<dbReference type="PANTHER" id="PTHR11547">
    <property type="entry name" value="ARGININE OR CREATINE KINASE"/>
    <property type="match status" value="1"/>
</dbReference>
<dbReference type="Pfam" id="PF00217">
    <property type="entry name" value="ATP-gua_Ptrans"/>
    <property type="match status" value="1"/>
</dbReference>
<dbReference type="SUPFAM" id="SSF55931">
    <property type="entry name" value="Glutamine synthetase/guanido kinase"/>
    <property type="match status" value="1"/>
</dbReference>
<dbReference type="PROSITE" id="PS51510">
    <property type="entry name" value="PHOSPHAGEN_KINASE_C"/>
    <property type="match status" value="1"/>
</dbReference>
<sequence>MKNWINEECNKEDIVINSNISLSRNLKEKPFSNKLNEIEARENVGFIYQIVKSELKDESCIYQLWNEDKELINSYLDKQLISKELIKNKDKTAFVLNSEETLSIMINEDDHLKLRCITAGFDLETAFDNITKLDDKIEKRVHYAFDENLGYLTTSPTNLGTGMRASVNIHLPALNFNDEISNFSKGLTQIGMDMKGLYEEGNKAYGNMYKISNQVTLGLTEEEIIDNLKGAVLNVISEEKKFREVLLTKCKYDIEDKVFRAYGILTSAILLSEKECTELLSSVRFGVELSLLDISKNKLNKLLVYTRDSSLQNYLKRKLSNKELNYERAKFVRAILAQN</sequence>
<keyword id="KW-0067">ATP-binding</keyword>
<keyword id="KW-0418">Kinase</keyword>
<keyword id="KW-0547">Nucleotide-binding</keyword>
<keyword id="KW-0808">Transferase</keyword>
<name>MCSB_CLOBB</name>
<comment type="function">
    <text evidence="1">Catalyzes the specific phosphorylation of arginine residues in proteins.</text>
</comment>
<comment type="catalytic activity">
    <reaction evidence="1">
        <text>L-arginyl-[protein] + ATP = N(omega)-phospho-L-arginyl-[protein] + ADP + H(+)</text>
        <dbReference type="Rhea" id="RHEA:43384"/>
        <dbReference type="Rhea" id="RHEA-COMP:10532"/>
        <dbReference type="Rhea" id="RHEA-COMP:10533"/>
        <dbReference type="ChEBI" id="CHEBI:15378"/>
        <dbReference type="ChEBI" id="CHEBI:29965"/>
        <dbReference type="ChEBI" id="CHEBI:30616"/>
        <dbReference type="ChEBI" id="CHEBI:83226"/>
        <dbReference type="ChEBI" id="CHEBI:456216"/>
        <dbReference type="EC" id="2.7.14.1"/>
    </reaction>
</comment>
<comment type="similarity">
    <text evidence="1">Belongs to the ATP:guanido phosphotransferase family.</text>
</comment>
<proteinExistence type="inferred from homology"/>
<evidence type="ECO:0000255" key="1">
    <source>
        <dbReference type="HAMAP-Rule" id="MF_00602"/>
    </source>
</evidence>
<protein>
    <recommendedName>
        <fullName evidence="1">Protein-arginine kinase</fullName>
        <ecNumber evidence="1">2.7.14.1</ecNumber>
    </recommendedName>
</protein>
<reference key="1">
    <citation type="submission" date="2008-04" db="EMBL/GenBank/DDBJ databases">
        <title>Complete sequence of Clostridium botulinum strain Eklund.</title>
        <authorList>
            <person name="Brinkac L.M."/>
            <person name="Brown J.L."/>
            <person name="Bruce D."/>
            <person name="Detter C."/>
            <person name="Munk C."/>
            <person name="Smith L.A."/>
            <person name="Smith T.J."/>
            <person name="Sutton G."/>
            <person name="Brettin T.S."/>
        </authorList>
    </citation>
    <scope>NUCLEOTIDE SEQUENCE [LARGE SCALE GENOMIC DNA]</scope>
    <source>
        <strain>Eklund 17B / Type B</strain>
    </source>
</reference>
<organism>
    <name type="scientific">Clostridium botulinum (strain Eklund 17B / Type B)</name>
    <dbReference type="NCBI Taxonomy" id="935198"/>
    <lineage>
        <taxon>Bacteria</taxon>
        <taxon>Bacillati</taxon>
        <taxon>Bacillota</taxon>
        <taxon>Clostridia</taxon>
        <taxon>Eubacteriales</taxon>
        <taxon>Clostridiaceae</taxon>
        <taxon>Clostridium</taxon>
    </lineage>
</organism>
<gene>
    <name evidence="1" type="primary">mcsB</name>
    <name type="ordered locus">CLL_A0206</name>
</gene>
<feature type="chain" id="PRO_1000130111" description="Protein-arginine kinase">
    <location>
        <begin position="1"/>
        <end position="339"/>
    </location>
</feature>
<feature type="domain" description="Phosphagen kinase C-terminal" evidence="1">
    <location>
        <begin position="14"/>
        <end position="242"/>
    </location>
</feature>
<feature type="binding site" evidence="1">
    <location>
        <begin position="17"/>
        <end position="21"/>
    </location>
    <ligand>
        <name>ATP</name>
        <dbReference type="ChEBI" id="CHEBI:30616"/>
    </ligand>
</feature>
<feature type="binding site" evidence="1">
    <location>
        <begin position="164"/>
        <end position="168"/>
    </location>
    <ligand>
        <name>ATP</name>
        <dbReference type="ChEBI" id="CHEBI:30616"/>
    </ligand>
</feature>
<feature type="binding site" evidence="1">
    <location>
        <begin position="195"/>
        <end position="200"/>
    </location>
    <ligand>
        <name>ATP</name>
        <dbReference type="ChEBI" id="CHEBI:30616"/>
    </ligand>
</feature>